<protein>
    <recommendedName>
        <fullName evidence="1">Queuine tRNA-ribosyltransferase</fullName>
        <ecNumber evidence="1">2.4.2.29</ecNumber>
    </recommendedName>
    <alternativeName>
        <fullName evidence="1">Guanine insertion enzyme</fullName>
    </alternativeName>
    <alternativeName>
        <fullName evidence="1">tRNA-guanine transglycosylase</fullName>
    </alternativeName>
</protein>
<comment type="function">
    <text evidence="1">Catalyzes the base-exchange of a guanine (G) residue with the queuine precursor 7-aminomethyl-7-deazaguanine (PreQ1) at position 34 (anticodon wobble position) in tRNAs with GU(N) anticodons (tRNA-Asp, -Asn, -His and -Tyr). Catalysis occurs through a double-displacement mechanism. The nucleophile active site attacks the C1' of nucleotide 34 to detach the guanine base from the RNA, forming a covalent enzyme-RNA intermediate. The proton acceptor active site deprotonates the incoming PreQ1, allowing a nucleophilic attack on the C1' of the ribose to form the product. After dissociation, two additional enzymatic reactions on the tRNA convert PreQ1 to queuine (Q), resulting in the hypermodified nucleoside queuosine (7-(((4,5-cis-dihydroxy-2-cyclopenten-1-yl)amino)methyl)-7-deazaguanosine).</text>
</comment>
<comment type="catalytic activity">
    <reaction evidence="1">
        <text>7-aminomethyl-7-carbaguanine + guanosine(34) in tRNA = 7-aminomethyl-7-carbaguanosine(34) in tRNA + guanine</text>
        <dbReference type="Rhea" id="RHEA:24104"/>
        <dbReference type="Rhea" id="RHEA-COMP:10341"/>
        <dbReference type="Rhea" id="RHEA-COMP:10342"/>
        <dbReference type="ChEBI" id="CHEBI:16235"/>
        <dbReference type="ChEBI" id="CHEBI:58703"/>
        <dbReference type="ChEBI" id="CHEBI:74269"/>
        <dbReference type="ChEBI" id="CHEBI:82833"/>
        <dbReference type="EC" id="2.4.2.29"/>
    </reaction>
</comment>
<comment type="cofactor">
    <cofactor evidence="1">
        <name>Zn(2+)</name>
        <dbReference type="ChEBI" id="CHEBI:29105"/>
    </cofactor>
    <text evidence="1">Binds 1 zinc ion per subunit.</text>
</comment>
<comment type="pathway">
    <text evidence="1">tRNA modification; tRNA-queuosine biosynthesis.</text>
</comment>
<comment type="subunit">
    <text evidence="1">Homodimer. Within each dimer, one monomer is responsible for RNA recognition and catalysis, while the other monomer binds to the replacement base PreQ1.</text>
</comment>
<comment type="similarity">
    <text evidence="1">Belongs to the queuine tRNA-ribosyltransferase family.</text>
</comment>
<dbReference type="EC" id="2.4.2.29" evidence="1"/>
<dbReference type="EMBL" id="AM920689">
    <property type="protein sequence ID" value="CAP51146.1"/>
    <property type="molecule type" value="Genomic_DNA"/>
</dbReference>
<dbReference type="SMR" id="B0RRR1"/>
<dbReference type="KEGG" id="xca:xcc-b100_1794"/>
<dbReference type="HOGENOM" id="CLU_022060_0_1_6"/>
<dbReference type="UniPathway" id="UPA00392"/>
<dbReference type="Proteomes" id="UP000001188">
    <property type="component" value="Chromosome"/>
</dbReference>
<dbReference type="GO" id="GO:0005829">
    <property type="term" value="C:cytosol"/>
    <property type="evidence" value="ECO:0007669"/>
    <property type="project" value="TreeGrafter"/>
</dbReference>
<dbReference type="GO" id="GO:0046872">
    <property type="term" value="F:metal ion binding"/>
    <property type="evidence" value="ECO:0007669"/>
    <property type="project" value="UniProtKB-KW"/>
</dbReference>
<dbReference type="GO" id="GO:0008479">
    <property type="term" value="F:tRNA-guanosine(34) queuine transglycosylase activity"/>
    <property type="evidence" value="ECO:0007669"/>
    <property type="project" value="UniProtKB-UniRule"/>
</dbReference>
<dbReference type="GO" id="GO:0008616">
    <property type="term" value="P:queuosine biosynthetic process"/>
    <property type="evidence" value="ECO:0007669"/>
    <property type="project" value="UniProtKB-UniRule"/>
</dbReference>
<dbReference type="GO" id="GO:0002099">
    <property type="term" value="P:tRNA wobble guanine modification"/>
    <property type="evidence" value="ECO:0007669"/>
    <property type="project" value="TreeGrafter"/>
</dbReference>
<dbReference type="GO" id="GO:0101030">
    <property type="term" value="P:tRNA-guanine transglycosylation"/>
    <property type="evidence" value="ECO:0007669"/>
    <property type="project" value="InterPro"/>
</dbReference>
<dbReference type="FunFam" id="3.20.20.105:FF:000001">
    <property type="entry name" value="Queuine tRNA-ribosyltransferase"/>
    <property type="match status" value="1"/>
</dbReference>
<dbReference type="Gene3D" id="3.20.20.105">
    <property type="entry name" value="Queuine tRNA-ribosyltransferase-like"/>
    <property type="match status" value="1"/>
</dbReference>
<dbReference type="HAMAP" id="MF_00168">
    <property type="entry name" value="Q_tRNA_Tgt"/>
    <property type="match status" value="1"/>
</dbReference>
<dbReference type="InterPro" id="IPR050076">
    <property type="entry name" value="ArchSynthase1/Queuine_TRR"/>
</dbReference>
<dbReference type="InterPro" id="IPR004803">
    <property type="entry name" value="TGT"/>
</dbReference>
<dbReference type="InterPro" id="IPR036511">
    <property type="entry name" value="TGT-like_sf"/>
</dbReference>
<dbReference type="InterPro" id="IPR002616">
    <property type="entry name" value="tRNA_ribo_trans-like"/>
</dbReference>
<dbReference type="NCBIfam" id="TIGR00430">
    <property type="entry name" value="Q_tRNA_tgt"/>
    <property type="match status" value="1"/>
</dbReference>
<dbReference type="NCBIfam" id="TIGR00449">
    <property type="entry name" value="tgt_general"/>
    <property type="match status" value="1"/>
</dbReference>
<dbReference type="PANTHER" id="PTHR46499">
    <property type="entry name" value="QUEUINE TRNA-RIBOSYLTRANSFERASE"/>
    <property type="match status" value="1"/>
</dbReference>
<dbReference type="PANTHER" id="PTHR46499:SF1">
    <property type="entry name" value="QUEUINE TRNA-RIBOSYLTRANSFERASE"/>
    <property type="match status" value="1"/>
</dbReference>
<dbReference type="Pfam" id="PF01702">
    <property type="entry name" value="TGT"/>
    <property type="match status" value="1"/>
</dbReference>
<dbReference type="SUPFAM" id="SSF51713">
    <property type="entry name" value="tRNA-guanine transglycosylase"/>
    <property type="match status" value="1"/>
</dbReference>
<name>TGT_XANCB</name>
<organism>
    <name type="scientific">Xanthomonas campestris pv. campestris (strain B100)</name>
    <dbReference type="NCBI Taxonomy" id="509169"/>
    <lineage>
        <taxon>Bacteria</taxon>
        <taxon>Pseudomonadati</taxon>
        <taxon>Pseudomonadota</taxon>
        <taxon>Gammaproteobacteria</taxon>
        <taxon>Lysobacterales</taxon>
        <taxon>Lysobacteraceae</taxon>
        <taxon>Xanthomonas</taxon>
    </lineage>
</organism>
<evidence type="ECO:0000255" key="1">
    <source>
        <dbReference type="HAMAP-Rule" id="MF_00168"/>
    </source>
</evidence>
<accession>B0RRR1</accession>
<feature type="chain" id="PRO_1000097577" description="Queuine tRNA-ribosyltransferase">
    <location>
        <begin position="1"/>
        <end position="381"/>
    </location>
</feature>
<feature type="region of interest" description="RNA binding" evidence="1">
    <location>
        <begin position="248"/>
        <end position="254"/>
    </location>
</feature>
<feature type="region of interest" description="RNA binding; important for wobble base 34 recognition" evidence="1">
    <location>
        <begin position="272"/>
        <end position="276"/>
    </location>
</feature>
<feature type="active site" description="Proton acceptor" evidence="1">
    <location>
        <position position="92"/>
    </location>
</feature>
<feature type="active site" description="Nucleophile" evidence="1">
    <location>
        <position position="267"/>
    </location>
</feature>
<feature type="binding site" evidence="1">
    <location>
        <begin position="92"/>
        <end position="96"/>
    </location>
    <ligand>
        <name>substrate</name>
    </ligand>
</feature>
<feature type="binding site" evidence="1">
    <location>
        <position position="146"/>
    </location>
    <ligand>
        <name>substrate</name>
    </ligand>
</feature>
<feature type="binding site" evidence="1">
    <location>
        <position position="190"/>
    </location>
    <ligand>
        <name>substrate</name>
    </ligand>
</feature>
<feature type="binding site" evidence="1">
    <location>
        <position position="217"/>
    </location>
    <ligand>
        <name>substrate</name>
    </ligand>
</feature>
<feature type="binding site" evidence="1">
    <location>
        <position position="305"/>
    </location>
    <ligand>
        <name>Zn(2+)</name>
        <dbReference type="ChEBI" id="CHEBI:29105"/>
    </ligand>
</feature>
<feature type="binding site" evidence="1">
    <location>
        <position position="307"/>
    </location>
    <ligand>
        <name>Zn(2+)</name>
        <dbReference type="ChEBI" id="CHEBI:29105"/>
    </ligand>
</feature>
<feature type="binding site" evidence="1">
    <location>
        <position position="310"/>
    </location>
    <ligand>
        <name>Zn(2+)</name>
        <dbReference type="ChEBI" id="CHEBI:29105"/>
    </ligand>
</feature>
<feature type="binding site" evidence="1">
    <location>
        <position position="337"/>
    </location>
    <ligand>
        <name>Zn(2+)</name>
        <dbReference type="ChEBI" id="CHEBI:29105"/>
    </ligand>
</feature>
<sequence>MSRLQFQLQTTDGHARRGRLTFPRGTVETPAFMPVGTYGSVKGILPEQIRALGAEIILGNTFHLYLRPGLDVIGDHGGLHGFARWDGPILTDSGGFQVFSLAHRRKITEQGVTFSSPTDGARVFLGPEESMQIQKVLDSDIVMIFDECTPYPATEDVARRSMELSLRWAQRSRQAHDGLGNDAALFGIVQGGVHPDLRSRSLDGLQAIGFDGYAIGGLAVGEPEHERNAMLEHLHPRLPAERPRYLMGVGRPEDLVEGVARGVDMFDCVMPTRNARNGHYFTSFGTVRIRNAKYERDLDTIEPGCGCHACSSGYTRAYLRHLDRCNEMLAPMLGTLHNLWYYEKLMADMRAAIAAGTFVEFRRSFYAARGATTPPLPGESS</sequence>
<proteinExistence type="inferred from homology"/>
<keyword id="KW-0328">Glycosyltransferase</keyword>
<keyword id="KW-0479">Metal-binding</keyword>
<keyword id="KW-0671">Queuosine biosynthesis</keyword>
<keyword id="KW-0808">Transferase</keyword>
<keyword id="KW-0819">tRNA processing</keyword>
<keyword id="KW-0862">Zinc</keyword>
<gene>
    <name evidence="1" type="primary">tgt</name>
    <name type="ordered locus">xcc-b100_1794</name>
</gene>
<reference key="1">
    <citation type="journal article" date="2008" name="J. Biotechnol.">
        <title>The genome of Xanthomonas campestris pv. campestris B100 and its use for the reconstruction of metabolic pathways involved in xanthan biosynthesis.</title>
        <authorList>
            <person name="Vorhoelter F.-J."/>
            <person name="Schneiker S."/>
            <person name="Goesmann A."/>
            <person name="Krause L."/>
            <person name="Bekel T."/>
            <person name="Kaiser O."/>
            <person name="Linke B."/>
            <person name="Patschkowski T."/>
            <person name="Rueckert C."/>
            <person name="Schmid J."/>
            <person name="Sidhu V.K."/>
            <person name="Sieber V."/>
            <person name="Tauch A."/>
            <person name="Watt S.A."/>
            <person name="Weisshaar B."/>
            <person name="Becker A."/>
            <person name="Niehaus K."/>
            <person name="Puehler A."/>
        </authorList>
    </citation>
    <scope>NUCLEOTIDE SEQUENCE [LARGE SCALE GENOMIC DNA]</scope>
    <source>
        <strain>B100</strain>
    </source>
</reference>